<evidence type="ECO:0000255" key="1"/>
<evidence type="ECO:0000305" key="2"/>
<organism>
    <name type="scientific">Rattus norvegicus</name>
    <name type="common">Rat</name>
    <dbReference type="NCBI Taxonomy" id="10116"/>
    <lineage>
        <taxon>Eukaryota</taxon>
        <taxon>Metazoa</taxon>
        <taxon>Chordata</taxon>
        <taxon>Craniata</taxon>
        <taxon>Vertebrata</taxon>
        <taxon>Euteleostomi</taxon>
        <taxon>Mammalia</taxon>
        <taxon>Eutheria</taxon>
        <taxon>Euarchontoglires</taxon>
        <taxon>Glires</taxon>
        <taxon>Rodentia</taxon>
        <taxon>Myomorpha</taxon>
        <taxon>Muroidea</taxon>
        <taxon>Muridae</taxon>
        <taxon>Murinae</taxon>
        <taxon>Rattus</taxon>
    </lineage>
</organism>
<reference key="1">
    <citation type="journal article" date="1992" name="J. Biol. Chem.">
        <title>Four novel members of the connexin family of gap junction proteins. Molecular cloning, expression, and chromosome mapping.</title>
        <authorList>
            <person name="Haefliger J.-A."/>
            <person name="Bruzzone R."/>
            <person name="Jenkins N.A."/>
            <person name="Gilbert D.J."/>
            <person name="Copeland N.G."/>
            <person name="Paul D.L."/>
        </authorList>
    </citation>
    <scope>NUCLEOTIDE SEQUENCE [GENOMIC DNA]</scope>
</reference>
<comment type="function">
    <text>One gap junction consists of a cluster of closely packed pairs of transmembrane channels, the connexons, through which materials of low MW diffuse from one cell to a neighboring cell.</text>
</comment>
<comment type="subunit">
    <text>A connexon is composed of a hexamer of connexins.</text>
</comment>
<comment type="subcellular location">
    <subcellularLocation>
        <location>Cell membrane</location>
        <topology>Multi-pass membrane protein</topology>
    </subcellularLocation>
    <subcellularLocation>
        <location>Cell junction</location>
        <location>Gap junction</location>
    </subcellularLocation>
</comment>
<comment type="tissue specificity">
    <text>Expressed in testis.</text>
</comment>
<comment type="similarity">
    <text evidence="2">Belongs to the connexin family. Alpha-type (group II) subfamily.</text>
</comment>
<dbReference type="EMBL" id="M76534">
    <property type="protein sequence ID" value="AAA40998.1"/>
    <property type="molecule type" value="Genomic_DNA"/>
</dbReference>
<dbReference type="PIR" id="C42053">
    <property type="entry name" value="C42053"/>
</dbReference>
<dbReference type="RefSeq" id="NP_062181.1">
    <property type="nucleotide sequence ID" value="NM_019308.2"/>
</dbReference>
<dbReference type="SMR" id="P28233"/>
<dbReference type="Ensembl" id="ENSRNOT00000115489.1">
    <property type="protein sequence ID" value="ENSRNOP00000085747.1"/>
    <property type="gene ID" value="ENSRNOG00000069341.1"/>
</dbReference>
<dbReference type="GeneID" id="54256"/>
<dbReference type="KEGG" id="rno:54256"/>
<dbReference type="UCSC" id="RGD:2693">
    <property type="organism name" value="rat"/>
</dbReference>
<dbReference type="AGR" id="RGD:2693"/>
<dbReference type="CTD" id="414089"/>
<dbReference type="RGD" id="2693">
    <property type="gene designation" value="Gja6"/>
</dbReference>
<dbReference type="GeneTree" id="ENSGT01090000260070"/>
<dbReference type="InParanoid" id="P28233"/>
<dbReference type="OMA" id="NVCYDVA"/>
<dbReference type="OrthoDB" id="8773830at2759"/>
<dbReference type="PhylomeDB" id="P28233"/>
<dbReference type="PRO" id="PR:P28233"/>
<dbReference type="Proteomes" id="UP000002494">
    <property type="component" value="Chromosome X"/>
</dbReference>
<dbReference type="GO" id="GO:0005922">
    <property type="term" value="C:connexin complex"/>
    <property type="evidence" value="ECO:0000318"/>
    <property type="project" value="GO_Central"/>
</dbReference>
<dbReference type="GO" id="GO:0005243">
    <property type="term" value="F:gap junction channel activity"/>
    <property type="evidence" value="ECO:0000318"/>
    <property type="project" value="GO_Central"/>
</dbReference>
<dbReference type="GO" id="GO:0010644">
    <property type="term" value="P:cell communication by electrical coupling"/>
    <property type="evidence" value="ECO:0000318"/>
    <property type="project" value="GO_Central"/>
</dbReference>
<dbReference type="GO" id="GO:0007267">
    <property type="term" value="P:cell-cell signaling"/>
    <property type="evidence" value="ECO:0000318"/>
    <property type="project" value="GO_Central"/>
</dbReference>
<dbReference type="GO" id="GO:0007507">
    <property type="term" value="P:heart development"/>
    <property type="evidence" value="ECO:0000318"/>
    <property type="project" value="GO_Central"/>
</dbReference>
<dbReference type="FunFam" id="1.20.1440.80:FF:000001">
    <property type="entry name" value="Gap junction alpha-1"/>
    <property type="match status" value="1"/>
</dbReference>
<dbReference type="Gene3D" id="1.20.1440.80">
    <property type="entry name" value="Gap junction channel protein cysteine-rich domain"/>
    <property type="match status" value="1"/>
</dbReference>
<dbReference type="InterPro" id="IPR000500">
    <property type="entry name" value="Connexin"/>
</dbReference>
<dbReference type="InterPro" id="IPR019570">
    <property type="entry name" value="Connexin_CCC"/>
</dbReference>
<dbReference type="InterPro" id="IPR017990">
    <property type="entry name" value="Connexin_CS"/>
</dbReference>
<dbReference type="InterPro" id="IPR013092">
    <property type="entry name" value="Connexin_N"/>
</dbReference>
<dbReference type="InterPro" id="IPR038359">
    <property type="entry name" value="Connexin_N_sf"/>
</dbReference>
<dbReference type="PANTHER" id="PTHR11984">
    <property type="entry name" value="CONNEXIN"/>
    <property type="match status" value="1"/>
</dbReference>
<dbReference type="PANTHER" id="PTHR11984:SF42">
    <property type="entry name" value="GAP JUNCTION ALPHA-6 PROTEIN"/>
    <property type="match status" value="1"/>
</dbReference>
<dbReference type="Pfam" id="PF00029">
    <property type="entry name" value="Connexin"/>
    <property type="match status" value="1"/>
</dbReference>
<dbReference type="PRINTS" id="PR00206">
    <property type="entry name" value="CONNEXIN"/>
</dbReference>
<dbReference type="SMART" id="SM00037">
    <property type="entry name" value="CNX"/>
    <property type="match status" value="1"/>
</dbReference>
<dbReference type="SMART" id="SM01089">
    <property type="entry name" value="Connexin_CCC"/>
    <property type="match status" value="1"/>
</dbReference>
<dbReference type="PROSITE" id="PS00407">
    <property type="entry name" value="CONNEXINS_1"/>
    <property type="match status" value="1"/>
</dbReference>
<dbReference type="PROSITE" id="PS00408">
    <property type="entry name" value="CONNEXINS_2"/>
    <property type="match status" value="1"/>
</dbReference>
<name>CXA6_RAT</name>
<protein>
    <recommendedName>
        <fullName>Gap junction alpha-6 protein</fullName>
    </recommendedName>
    <alternativeName>
        <fullName>Connexin-33</fullName>
        <shortName>Cx33</shortName>
    </alternativeName>
</protein>
<sequence>MSDWSALHQLLEKVQPYSTAGGKVWIKVLFIFRILLLGTAIESAWSDEQFEFHCNTQQPGCENVCYDQAFPISHVRLWVLQVIFVSVPTLLHLAHVYYVIRQNEKLKKQEEEELKVAHFNGASGERRLQKHTGKHIKCGSKEHGNRKMRGRLLLTYMASIFFKSVFEVAFLLIQWYLYGFTLSAVYICEQSPCPHRVDCFLSRPTEKTIFILFMLVVSMVSFVLNVIELFYVLFKAIKNHLGNEKEEVYCNPVELQKPSCVSSSAVLTTICSSDQVVPVGLSSFYM</sequence>
<accession>P28233</accession>
<keyword id="KW-0965">Cell junction</keyword>
<keyword id="KW-1003">Cell membrane</keyword>
<keyword id="KW-0303">Gap junction</keyword>
<keyword id="KW-0472">Membrane</keyword>
<keyword id="KW-1185">Reference proteome</keyword>
<keyword id="KW-0812">Transmembrane</keyword>
<keyword id="KW-1133">Transmembrane helix</keyword>
<proteinExistence type="evidence at transcript level"/>
<gene>
    <name type="primary">Gja6</name>
    <name type="synonym">Cxn-33</name>
</gene>
<feature type="chain" id="PRO_0000057824" description="Gap junction alpha-6 protein">
    <location>
        <begin position="1"/>
        <end position="286"/>
    </location>
</feature>
<feature type="topological domain" description="Cytoplasmic" evidence="1">
    <location>
        <begin position="1"/>
        <end position="23"/>
    </location>
</feature>
<feature type="transmembrane region" description="Helical" evidence="1">
    <location>
        <begin position="24"/>
        <end position="41"/>
    </location>
</feature>
<feature type="topological domain" description="Extracellular" evidence="1">
    <location>
        <begin position="42"/>
        <end position="76"/>
    </location>
</feature>
<feature type="transmembrane region" description="Helical" evidence="1">
    <location>
        <begin position="77"/>
        <end position="99"/>
    </location>
</feature>
<feature type="topological domain" description="Cytoplasmic" evidence="1">
    <location>
        <begin position="100"/>
        <end position="151"/>
    </location>
</feature>
<feature type="transmembrane region" description="Helical" evidence="1">
    <location>
        <begin position="152"/>
        <end position="174"/>
    </location>
</feature>
<feature type="topological domain" description="Extracellular" evidence="1">
    <location>
        <begin position="175"/>
        <end position="209"/>
    </location>
</feature>
<feature type="transmembrane region" description="Helical" evidence="1">
    <location>
        <begin position="210"/>
        <end position="232"/>
    </location>
</feature>
<feature type="topological domain" description="Cytoplasmic" evidence="1">
    <location>
        <begin position="233"/>
        <end position="286"/>
    </location>
</feature>